<dbReference type="EMBL" id="BC070852">
    <property type="protein sequence ID" value="AAH70852.1"/>
    <property type="molecule type" value="mRNA"/>
</dbReference>
<dbReference type="RefSeq" id="NP_001084809.1">
    <property type="nucleotide sequence ID" value="NM_001091340.1"/>
</dbReference>
<dbReference type="SMR" id="Q6NRB0"/>
<dbReference type="IntAct" id="Q6NRB0">
    <property type="interactions" value="1"/>
</dbReference>
<dbReference type="DNASU" id="431850"/>
<dbReference type="GeneID" id="431850"/>
<dbReference type="KEGG" id="xla:431850"/>
<dbReference type="AGR" id="Xenbase:XB-GENE-991663"/>
<dbReference type="CTD" id="431850"/>
<dbReference type="Xenbase" id="XB-GENE-991663">
    <property type="gene designation" value="hook2.L"/>
</dbReference>
<dbReference type="OrthoDB" id="49395at2759"/>
<dbReference type="Proteomes" id="UP000186698">
    <property type="component" value="Chromosome 3L"/>
</dbReference>
<dbReference type="Bgee" id="431850">
    <property type="expression patterns" value="Expressed in egg cell and 19 other cell types or tissues"/>
</dbReference>
<dbReference type="GO" id="GO:0005813">
    <property type="term" value="C:centrosome"/>
    <property type="evidence" value="ECO:0000318"/>
    <property type="project" value="GO_Central"/>
</dbReference>
<dbReference type="GO" id="GO:0005737">
    <property type="term" value="C:cytoplasm"/>
    <property type="evidence" value="ECO:0000318"/>
    <property type="project" value="GO_Central"/>
</dbReference>
<dbReference type="GO" id="GO:0070695">
    <property type="term" value="C:FHF complex"/>
    <property type="evidence" value="ECO:0000250"/>
    <property type="project" value="UniProtKB"/>
</dbReference>
<dbReference type="GO" id="GO:0005874">
    <property type="term" value="C:microtubule"/>
    <property type="evidence" value="ECO:0007669"/>
    <property type="project" value="UniProtKB-KW"/>
</dbReference>
<dbReference type="GO" id="GO:0051959">
    <property type="term" value="F:dynein light intermediate chain binding"/>
    <property type="evidence" value="ECO:0000318"/>
    <property type="project" value="GO_Central"/>
</dbReference>
<dbReference type="GO" id="GO:0008017">
    <property type="term" value="F:microtubule binding"/>
    <property type="evidence" value="ECO:0000318"/>
    <property type="project" value="GO_Central"/>
</dbReference>
<dbReference type="GO" id="GO:0031122">
    <property type="term" value="P:cytoplasmic microtubule organization"/>
    <property type="evidence" value="ECO:0000318"/>
    <property type="project" value="GO_Central"/>
</dbReference>
<dbReference type="GO" id="GO:0030705">
    <property type="term" value="P:cytoskeleton-dependent intracellular transport"/>
    <property type="evidence" value="ECO:0000318"/>
    <property type="project" value="GO_Central"/>
</dbReference>
<dbReference type="GO" id="GO:0045022">
    <property type="term" value="P:early endosome to late endosome transport"/>
    <property type="evidence" value="ECO:0000250"/>
    <property type="project" value="UniProtKB"/>
</dbReference>
<dbReference type="GO" id="GO:0007032">
    <property type="term" value="P:endosome organization"/>
    <property type="evidence" value="ECO:0000250"/>
    <property type="project" value="UniProtKB"/>
</dbReference>
<dbReference type="GO" id="GO:0008333">
    <property type="term" value="P:endosome to lysosome transport"/>
    <property type="evidence" value="ECO:0000250"/>
    <property type="project" value="UniProtKB"/>
</dbReference>
<dbReference type="GO" id="GO:0007040">
    <property type="term" value="P:lysosome organization"/>
    <property type="evidence" value="ECO:0000250"/>
    <property type="project" value="UniProtKB"/>
</dbReference>
<dbReference type="GO" id="GO:0015031">
    <property type="term" value="P:protein transport"/>
    <property type="evidence" value="ECO:0007669"/>
    <property type="project" value="UniProtKB-KW"/>
</dbReference>
<dbReference type="FunFam" id="1.10.418.10:FF:000024">
    <property type="entry name" value="Hook homolog 3 (Drosophila)"/>
    <property type="match status" value="1"/>
</dbReference>
<dbReference type="Gene3D" id="1.10.418.10">
    <property type="entry name" value="Calponin-like domain"/>
    <property type="match status" value="1"/>
</dbReference>
<dbReference type="InterPro" id="IPR001715">
    <property type="entry name" value="CH_dom"/>
</dbReference>
<dbReference type="InterPro" id="IPR036872">
    <property type="entry name" value="CH_dom_sf"/>
</dbReference>
<dbReference type="InterPro" id="IPR008636">
    <property type="entry name" value="Hook_C"/>
</dbReference>
<dbReference type="InterPro" id="IPR043936">
    <property type="entry name" value="HOOK_N"/>
</dbReference>
<dbReference type="PANTHER" id="PTHR18947">
    <property type="entry name" value="HOOK PROTEINS"/>
    <property type="match status" value="1"/>
</dbReference>
<dbReference type="PANTHER" id="PTHR18947:SF37">
    <property type="entry name" value="PROTEIN HOOK HOMOLOG 2"/>
    <property type="match status" value="1"/>
</dbReference>
<dbReference type="Pfam" id="PF05622">
    <property type="entry name" value="HOOK"/>
    <property type="match status" value="1"/>
</dbReference>
<dbReference type="Pfam" id="PF19047">
    <property type="entry name" value="HOOK_N"/>
    <property type="match status" value="1"/>
</dbReference>
<dbReference type="SUPFAM" id="SSF116907">
    <property type="entry name" value="Hook domain"/>
    <property type="match status" value="1"/>
</dbReference>
<dbReference type="PROSITE" id="PS50021">
    <property type="entry name" value="CH"/>
    <property type="match status" value="1"/>
</dbReference>
<keyword id="KW-0175">Coiled coil</keyword>
<keyword id="KW-0963">Cytoplasm</keyword>
<keyword id="KW-0206">Cytoskeleton</keyword>
<keyword id="KW-0493">Microtubule</keyword>
<keyword id="KW-0653">Protein transport</keyword>
<keyword id="KW-1185">Reference proteome</keyword>
<keyword id="KW-0813">Transport</keyword>
<gene>
    <name type="primary">hook2</name>
</gene>
<feature type="chain" id="PRO_0000379055" description="Protein Hook homolog 2">
    <location>
        <begin position="1"/>
        <end position="721"/>
    </location>
</feature>
<feature type="domain" description="Calponin-homology (CH)" evidence="3">
    <location>
        <begin position="7"/>
        <end position="123"/>
    </location>
</feature>
<feature type="region of interest" description="Disordered" evidence="4">
    <location>
        <begin position="696"/>
        <end position="721"/>
    </location>
</feature>
<feature type="coiled-coil region" evidence="2">
    <location>
        <begin position="181"/>
        <end position="425"/>
    </location>
</feature>
<feature type="coiled-coil region" evidence="2">
    <location>
        <begin position="484"/>
        <end position="659"/>
    </location>
</feature>
<name>HOOK2_XENLA</name>
<comment type="function">
    <text evidence="1">May function to promote vesicle trafficking and/or fusion. May contribute to the establishment and maintenance of centrosome function (By similarity).</text>
</comment>
<comment type="subunit">
    <text evidence="1">Interacts with microtubules.</text>
</comment>
<comment type="subcellular location">
    <subcellularLocation>
        <location evidence="1">Cytoplasm</location>
        <location evidence="1">Cytoskeleton</location>
        <location evidence="1">Microtubule organizing center</location>
        <location evidence="1">Centrosome</location>
    </subcellularLocation>
    <subcellularLocation>
        <location evidence="1">Cytoplasm</location>
    </subcellularLocation>
    <subcellularLocation>
        <location evidence="1">Cytoplasm</location>
        <location evidence="1">Cytoskeleton</location>
    </subcellularLocation>
</comment>
<comment type="similarity">
    <text evidence="5">Belongs to the hook family.</text>
</comment>
<proteinExistence type="evidence at transcript level"/>
<evidence type="ECO:0000250" key="1"/>
<evidence type="ECO:0000255" key="2"/>
<evidence type="ECO:0000255" key="3">
    <source>
        <dbReference type="PROSITE-ProRule" id="PRU00044"/>
    </source>
</evidence>
<evidence type="ECO:0000256" key="4">
    <source>
        <dbReference type="SAM" id="MobiDB-lite"/>
    </source>
</evidence>
<evidence type="ECO:0000305" key="5"/>
<accession>Q6NRB0</accession>
<reference key="1">
    <citation type="submission" date="2004-05" db="EMBL/GenBank/DDBJ databases">
        <authorList>
            <consortium name="NIH - Xenopus Gene Collection (XGC) project"/>
        </authorList>
    </citation>
    <scope>NUCLEOTIDE SEQUENCE [LARGE SCALE MRNA]</scope>
    <source>
        <tissue>Oocyte</tissue>
    </source>
</reference>
<organism>
    <name type="scientific">Xenopus laevis</name>
    <name type="common">African clawed frog</name>
    <dbReference type="NCBI Taxonomy" id="8355"/>
    <lineage>
        <taxon>Eukaryota</taxon>
        <taxon>Metazoa</taxon>
        <taxon>Chordata</taxon>
        <taxon>Craniata</taxon>
        <taxon>Vertebrata</taxon>
        <taxon>Euteleostomi</taxon>
        <taxon>Amphibia</taxon>
        <taxon>Batrachia</taxon>
        <taxon>Anura</taxon>
        <taxon>Pipoidea</taxon>
        <taxon>Pipidae</taxon>
        <taxon>Xenopodinae</taxon>
        <taxon>Xenopus</taxon>
        <taxon>Xenopus</taxon>
    </lineage>
</organism>
<sequence>MSSKRKVELCDSLLTWMQTFQVSGPCSSYEDLTGGVAIAQVLNRIDPSWFNEAWLVRVKKDTTENWRLKVSNLKRILQSVLEYYQDVLGHPVSDDHIPDVALIGEFSNDTELRKMVQLVLGCAISCDKKEEHIQQIMTLGESVQQAVMESIQELLSKAPSDAVTSESFINYDSQSRKYYFLSEDNDEKNEILQRCHDLEQQVSLLMEEKKNMMGENRTLKEQQEQSGMGTPQLFNKKLLLLQSQIEQLQEENYRLESSRDDYRQRCQELDRDVQELQQRNQDLTGLAHESQALRDEMDVLRHSSDRVGKLESLVDSYKKKLEDLGDLRRQVKLLEERNTMYMQRTFQLEEDLHKANASRGQVESLSRQVQELHKKHSTESLRAEKWQFEFQTLKEKFEALQKERERLIAERDSLRETNDELRCSHLQQTCLGQADLLLSGSSPPLENLAAEIVPAELRETVIRLQQENKMLCAQEASYHERLCDLQNFLEESNRSKNRLESESRLQQQQIKGLKAQVEELQKQLREQGNRAEDSSQLKRKLEEHLEMLHDAHSELQKKREYIETLEPKADLNMSRKVDELQQILHQKEEDMRAMEERYKRYVDKARTVIKSLDPKQQNYIPPEIQALKNQLQEKDTRIRHLETDYEKTKVQRDQEEKLIISAWYNMGMALHQKSTDEKTQPPNGAQSFLAQQRLATNARRGQISRSHTLLPRYTDKRQSLS</sequence>
<protein>
    <recommendedName>
        <fullName>Protein Hook homolog 2</fullName>
    </recommendedName>
</protein>